<feature type="signal peptide" evidence="1">
    <location>
        <begin position="1"/>
        <end position="22"/>
    </location>
</feature>
<feature type="propeptide" id="PRO_0000306123">
    <location>
        <begin position="23"/>
        <end position="98"/>
    </location>
</feature>
<feature type="peptide" id="PRO_0000306124" description="Feeding circuit activating peptide a">
    <location>
        <begin position="101"/>
        <end position="113"/>
    </location>
</feature>
<feature type="propeptide" id="PRO_0000306125" description="Connecting peptide">
    <location>
        <begin position="117"/>
        <end position="131"/>
    </location>
</feature>
<feature type="peptide" id="PRO_0000306126" description="Feeding circuit activating peptide b">
    <location>
        <begin position="134"/>
        <end position="146"/>
    </location>
</feature>
<feature type="peptide" id="PRO_0000306127" description="Feeding circuit activating peptide c">
    <location>
        <begin position="149"/>
        <end position="161"/>
    </location>
</feature>
<feature type="propeptide" id="PRO_0000306150">
    <location>
        <begin position="164"/>
        <end position="168"/>
    </location>
</feature>
<feature type="peptide" id="PRO_0000306128" description="Feeding circuit activating peptide d">
    <location>
        <begin position="171"/>
        <end position="183"/>
    </location>
</feature>
<feature type="peptide" id="PRO_0000306129" description="Feeding circuit activating peptide b">
    <location>
        <begin position="187"/>
        <end position="199"/>
    </location>
</feature>
<feature type="propeptide" id="PRO_0000306151">
    <location>
        <begin position="202"/>
        <end position="220"/>
    </location>
</feature>
<feature type="peptide" id="PRO_0000306130" description="Feeding circuit activating peptide e">
    <location>
        <begin position="222"/>
        <end position="233"/>
    </location>
</feature>
<feature type="propeptide" id="PRO_0000306152">
    <location>
        <begin position="236"/>
        <end position="253"/>
    </location>
</feature>
<feature type="peptide" id="PRO_0000306131" description="Feeding circuit activating peptide b">
    <location>
        <begin position="256"/>
        <end position="268"/>
    </location>
</feature>
<feature type="propeptide" id="PRO_0000306153">
    <location>
        <begin position="271"/>
        <end position="275"/>
    </location>
</feature>
<feature type="peptide" id="PRO_0000306132" description="Feeding circuit activating peptide f">
    <location>
        <begin position="278"/>
        <end position="290"/>
    </location>
</feature>
<feature type="propeptide" id="PRO_0000306154">
    <location>
        <begin position="293"/>
        <end position="297"/>
    </location>
</feature>
<feature type="peptide" id="PRO_0000306133" description="Feeding circuit activating peptide b">
    <location>
        <begin position="300"/>
        <end position="312"/>
    </location>
</feature>
<feature type="propeptide" id="PRO_0000306155">
    <location>
        <begin position="315"/>
        <end position="321"/>
    </location>
</feature>
<feature type="peptide" id="PRO_0000306134" description="Feeding circuit activating peptide b">
    <location>
        <begin position="324"/>
        <end position="336"/>
    </location>
</feature>
<feature type="propeptide" id="PRO_0000306156">
    <location>
        <begin position="339"/>
        <end position="341"/>
    </location>
</feature>
<feature type="peptide" id="PRO_0000306135" description="Feeding circuit activating peptide g">
    <location>
        <begin position="344"/>
        <end position="356"/>
    </location>
</feature>
<feature type="propeptide" id="PRO_0000306157">
    <location>
        <begin position="359"/>
        <end position="366"/>
    </location>
</feature>
<feature type="peptide" id="PRO_0000306136" description="Feeding circuit activating peptide g">
    <location>
        <begin position="369"/>
        <end position="381"/>
    </location>
</feature>
<feature type="propeptide" id="PRO_0000306158">
    <location>
        <begin position="384"/>
        <end position="388"/>
    </location>
</feature>
<feature type="peptide" id="PRO_0000306137" description="Feeding circuit activating peptide b">
    <location>
        <begin position="391"/>
        <end position="403"/>
    </location>
</feature>
<feature type="propeptide" id="PRO_0000306159">
    <location>
        <begin position="406"/>
        <end position="410"/>
    </location>
</feature>
<feature type="peptide" id="PRO_0000306138" description="Feeding circuit activating peptide g">
    <location>
        <begin position="413"/>
        <end position="425"/>
    </location>
</feature>
<feature type="propeptide" id="PRO_0000306160">
    <location>
        <begin position="428"/>
        <end position="432"/>
    </location>
</feature>
<feature type="peptide" id="PRO_0000306139" description="Feeding circuit activating peptide g">
    <location>
        <begin position="435"/>
        <end position="447"/>
    </location>
</feature>
<feature type="propeptide" id="PRO_0000306161">
    <location>
        <begin position="450"/>
        <end position="454"/>
    </location>
</feature>
<feature type="peptide" id="PRO_0000306140" description="Feeding circuit activating peptide g">
    <location>
        <begin position="457"/>
        <end position="469"/>
    </location>
</feature>
<feature type="propeptide" id="PRO_0000306162">
    <location>
        <begin position="472"/>
        <end position="476"/>
    </location>
</feature>
<feature type="peptide" id="PRO_0000306141" description="Feeding circuit activating peptide g">
    <location>
        <begin position="479"/>
        <end position="491"/>
    </location>
</feature>
<feature type="propeptide" id="PRO_0000306163">
    <location>
        <begin position="494"/>
        <end position="498"/>
    </location>
</feature>
<feature type="peptide" id="PRO_0000306142" description="Feeding circuit activating peptide g">
    <location>
        <begin position="501"/>
        <end position="513"/>
    </location>
</feature>
<feature type="propeptide" id="PRO_0000306164">
    <location>
        <begin position="516"/>
        <end position="520"/>
    </location>
</feature>
<feature type="peptide" id="PRO_0000306143" description="Feeding circuit activating peptide g">
    <location>
        <begin position="523"/>
        <end position="535"/>
    </location>
</feature>
<feature type="propeptide" id="PRO_0000306165">
    <location>
        <begin position="538"/>
        <end position="542"/>
    </location>
</feature>
<feature type="peptide" id="PRO_0000306144" description="Feeding circuit activating peptide g">
    <location>
        <begin position="545"/>
        <end position="557"/>
    </location>
</feature>
<feature type="propeptide" id="PRO_0000306166">
    <location>
        <begin position="560"/>
        <end position="564"/>
    </location>
</feature>
<feature type="peptide" id="PRO_0000306145" description="Feeding circuit activating peptide b">
    <location>
        <begin position="567"/>
        <end position="579"/>
    </location>
</feature>
<feature type="propeptide" id="PRO_0000306167">
    <location>
        <begin position="582"/>
        <end position="592"/>
    </location>
</feature>
<feature type="peptide" id="PRO_0000306146" description="Feeding circuit activating peptide b">
    <location>
        <begin position="595"/>
        <end position="607"/>
    </location>
</feature>
<feature type="propeptide" id="PRO_0000306168">
    <location>
        <begin position="610"/>
        <end position="614"/>
    </location>
</feature>
<feature type="peptide" id="PRO_0000306147" description="Feeding circuit activating peptide g">
    <location>
        <begin position="617"/>
        <end position="629"/>
    </location>
</feature>
<feature type="peptide" id="PRO_0000306148" description="Feeding circuit activating peptide h">
    <location>
        <begin position="632"/>
        <end position="644"/>
    </location>
</feature>
<feature type="propeptide" id="PRO_0000306149">
    <location>
        <begin position="647"/>
        <end position="742"/>
    </location>
</feature>
<reference key="1">
    <citation type="journal article" date="2002" name="J. Neurosci.">
        <title>Identification and characterization of the feeding circuit-activating peptides, a novel neuropeptide family of Aplysia.</title>
        <authorList>
            <person name="Sweedler J.V."/>
            <person name="Li L."/>
            <person name="Rubakhin S.S."/>
            <person name="Alexeeva V."/>
            <person name="Dembrow N.C."/>
            <person name="Dowling O."/>
            <person name="Jing J."/>
            <person name="Weiss K.R."/>
            <person name="Vilim F.S."/>
        </authorList>
    </citation>
    <scope>NUCLEOTIDE SEQUENCE [MRNA]</scope>
    <scope>FUNCTION</scope>
    <scope>TISSUE SPECIFICITY</scope>
    <scope>PROTEOLYTIC PROCESSING</scope>
    <scope>MASS SPECTROMETRY</scope>
</reference>
<proteinExistence type="evidence at protein level"/>
<sequence>MTFAASFRALLCVLFCAALVHCKTRTKRYVPHSELWRILAVVDELQREQAAEQRQEDALALALRSDIAGGGGGGQLADNVRWFPETYDYGALADRDVDKRVFDSLGGYEVHGFKKRGSLDAIPQDTDASSDKRALDSLGGFQVHGWKRALDTLGGFQVHGWKRGSGAEKRQVDRLGGFQVHGWKKRALDSLGGFQVHGWKKRGTGGQMHASSPRVVPWGSRSLLADTQSGHRWKRDTELVENRQTTGQQTEVNKRALDSLGGFQVHGWKRSGEAGKRQVDSLGGFQVHGWKRADDQGKRALDSLGGFQVHGWKRFDNSAGEKRALDSLGGFQVHGWKRAGDKKSLDSLGSFQVHGWKRFDNDISGQKRSLDSLGSFQVHGWKRSDQDNKRALDSLGGFQVHGWKRADDDGKRSLDSLGSFQVHGWKRADEDDKKSLDSLGSFQVHGWKRGDEDDKRSLDSLGSFQVHGWKRADEDDKRSLDSLGSFQVHGWKRSDEDDKRSLDSLGSFQVHGWKRSDEDDKRSLDSLGSFQVHGWKRADEDDKRSLDSLGSFQVHGWKRNSPGLKRALDSLGGFQVHGWKRNNEYYSGAENEKRALDSLGGFQVHGWKRDQPGEKRSLDSLGSFQVHGWKRNLNNLGSFQVHGWKKNSADEMGDKPGVESYQDNSGKILSGKAQEFEGGDETGDIHGVVRTLSGVDASGKERENIKELDAKFKTNDGGVGVEHIFVDNVKSADDDVPSAGQM</sequence>
<keyword id="KW-0372">Hormone</keyword>
<keyword id="KW-0527">Neuropeptide</keyword>
<keyword id="KW-0964">Secreted</keyword>
<keyword id="KW-0732">Signal</keyword>
<name>FCAP_APLCA</name>
<protein>
    <recommendedName>
        <fullName>Feeding circuit activating peptides</fullName>
        <shortName>FCAP</shortName>
    </recommendedName>
    <component>
        <recommendedName>
            <fullName>Feeding circuit activating peptide a</fullName>
            <shortName>FCAPa</shortName>
        </recommendedName>
    </component>
    <component>
        <recommendedName>
            <fullName>Feeding circuit activating peptide b</fullName>
            <shortName>FCAPb</shortName>
        </recommendedName>
    </component>
    <component>
        <recommendedName>
            <fullName>Feeding circuit activating peptide c</fullName>
            <shortName>FCAPc</shortName>
        </recommendedName>
    </component>
    <component>
        <recommendedName>
            <fullName>Feeding circuit activating peptide d</fullName>
            <shortName>FCAPd</shortName>
        </recommendedName>
    </component>
    <component>
        <recommendedName>
            <fullName>Feeding circuit activating peptide e</fullName>
            <shortName>FCAPe</shortName>
        </recommendedName>
    </component>
    <component>
        <recommendedName>
            <fullName>Feeding circuit activating peptide f</fullName>
            <shortName>FCAPf</shortName>
        </recommendedName>
    </component>
    <component>
        <recommendedName>
            <fullName>Feeding circuit activating peptide g</fullName>
            <shortName>FCAPg</shortName>
        </recommendedName>
    </component>
    <component>
        <recommendedName>
            <fullName>Feeding circuit activating peptide h</fullName>
            <shortName>FCAPh</shortName>
        </recommendedName>
    </component>
</protein>
<evidence type="ECO:0000255" key="1"/>
<evidence type="ECO:0000269" key="2">
    <source>
    </source>
</evidence>
<comment type="function">
    <text evidence="2">Initiates organized rhythmic motor output of feeding circuit.</text>
</comment>
<comment type="subcellular location">
    <subcellularLocation>
        <location>Secreted</location>
    </subcellularLocation>
</comment>
<comment type="tissue specificity">
    <text evidence="2">Expressed in pleural, pedal, abdominal, buccal and cerebral ganglia.</text>
</comment>
<comment type="mass spectrometry">
    <molecule>Feeding circuit activating peptide a</molecule>
</comment>
<comment type="mass spectrometry">
    <molecule>Feeding circuit activating peptide b</molecule>
</comment>
<comment type="mass spectrometry">
    <molecule>Feeding circuit activating peptide c</molecule>
</comment>
<comment type="mass spectrometry">
    <molecule>Feeding circuit activating peptide d</molecule>
</comment>
<comment type="mass spectrometry">
    <molecule>Feeding circuit activating peptide e</molecule>
</comment>
<comment type="mass spectrometry">
    <molecule>Feeding circuit activating peptide f</molecule>
</comment>
<comment type="mass spectrometry">
    <molecule>Feeding circuit activating peptide g</molecule>
</comment>
<comment type="mass spectrometry">
    <molecule>Feeding circuit activating peptide h</molecule>
</comment>
<dbReference type="EMBL" id="AY118084">
    <property type="protein sequence ID" value="AAM80561.1"/>
    <property type="molecule type" value="mRNA"/>
</dbReference>
<dbReference type="RefSeq" id="NP_001191518.1">
    <property type="nucleotide sequence ID" value="NM_001204589.1"/>
</dbReference>
<dbReference type="EnsemblMetazoa" id="NM_001204589.1">
    <property type="protein sequence ID" value="NP_001191518.1"/>
    <property type="gene ID" value="LOC100533286"/>
</dbReference>
<dbReference type="GeneID" id="100533286"/>
<dbReference type="OrthoDB" id="6093641at2759"/>
<dbReference type="Proteomes" id="UP000694888">
    <property type="component" value="Unplaced"/>
</dbReference>
<dbReference type="GO" id="GO:0005576">
    <property type="term" value="C:extracellular region"/>
    <property type="evidence" value="ECO:0007669"/>
    <property type="project" value="UniProtKB-SubCell"/>
</dbReference>
<dbReference type="GO" id="GO:0005179">
    <property type="term" value="F:hormone activity"/>
    <property type="evidence" value="ECO:0007669"/>
    <property type="project" value="UniProtKB-KW"/>
</dbReference>
<dbReference type="GO" id="GO:0007218">
    <property type="term" value="P:neuropeptide signaling pathway"/>
    <property type="evidence" value="ECO:0007669"/>
    <property type="project" value="UniProtKB-KW"/>
</dbReference>
<organism>
    <name type="scientific">Aplysia californica</name>
    <name type="common">California sea hare</name>
    <dbReference type="NCBI Taxonomy" id="6500"/>
    <lineage>
        <taxon>Eukaryota</taxon>
        <taxon>Metazoa</taxon>
        <taxon>Spiralia</taxon>
        <taxon>Lophotrochozoa</taxon>
        <taxon>Mollusca</taxon>
        <taxon>Gastropoda</taxon>
        <taxon>Heterobranchia</taxon>
        <taxon>Euthyneura</taxon>
        <taxon>Tectipleura</taxon>
        <taxon>Aplysiida</taxon>
        <taxon>Aplysioidea</taxon>
        <taxon>Aplysiidae</taxon>
        <taxon>Aplysia</taxon>
    </lineage>
</organism>
<accession>Q8ISH7</accession>